<organism>
    <name type="scientific">Cytophaga hutchinsonii (strain ATCC 33406 / DSM 1761 / CIP 103989 / NBRC 15051 / NCIMB 9469 / D465)</name>
    <dbReference type="NCBI Taxonomy" id="269798"/>
    <lineage>
        <taxon>Bacteria</taxon>
        <taxon>Pseudomonadati</taxon>
        <taxon>Bacteroidota</taxon>
        <taxon>Cytophagia</taxon>
        <taxon>Cytophagales</taxon>
        <taxon>Cytophagaceae</taxon>
        <taxon>Cytophaga</taxon>
    </lineage>
</organism>
<sequence length="464" mass="52064">MTALQGFLTPTEIVAELDKYIIGQHDAKRNVAIALRNRWRRMHADADMRKEIMPNNILLIGPTGVGKTEIARRLAKLADAPFTKVEASKFTEVGYVGRDVESMVRDLVEQAVNMVKTQKKEEVKIKVSQVVEDILLDLLIPPVKSTGMGFKTASTQSIDTNEIPDNDQELNERTRELFREKIRSGELDERKVEINVQQQGPGVGVVGGAMDEASMMNIQEMIGNMMPKKTKKRKLSIAEARKILLEEESAKLIDMDDVKDEAIRKTENMGIIFIDEIDKVASSKKGNGPDVSREGVQRDLLPIVEGSAVNTKYGTVHTDHILFIAAGAFHVSKPSDLIPELQGRFPIRVELNSLTEADFYHILKEPKNALTRQYQALLSSENVNIEFHDDALKAISEIAFELNVEVENIGARRLHTVMSHLLNELLFDVPDKIETHSTVVITKELVDQKLKGLVKNRDLSQFIL</sequence>
<proteinExistence type="inferred from homology"/>
<name>HSLU_CYTH3</name>
<protein>
    <recommendedName>
        <fullName evidence="1">ATP-dependent protease ATPase subunit HslU</fullName>
    </recommendedName>
    <alternativeName>
        <fullName evidence="1">Unfoldase HslU</fullName>
    </alternativeName>
</protein>
<evidence type="ECO:0000255" key="1">
    <source>
        <dbReference type="HAMAP-Rule" id="MF_00249"/>
    </source>
</evidence>
<feature type="chain" id="PRO_1000125433" description="ATP-dependent protease ATPase subunit HslU">
    <location>
        <begin position="1"/>
        <end position="464"/>
    </location>
</feature>
<feature type="binding site" evidence="1">
    <location>
        <position position="22"/>
    </location>
    <ligand>
        <name>ATP</name>
        <dbReference type="ChEBI" id="CHEBI:30616"/>
    </ligand>
</feature>
<feature type="binding site" evidence="1">
    <location>
        <begin position="64"/>
        <end position="69"/>
    </location>
    <ligand>
        <name>ATP</name>
        <dbReference type="ChEBI" id="CHEBI:30616"/>
    </ligand>
</feature>
<feature type="binding site" evidence="1">
    <location>
        <position position="275"/>
    </location>
    <ligand>
        <name>ATP</name>
        <dbReference type="ChEBI" id="CHEBI:30616"/>
    </ligand>
</feature>
<feature type="binding site" evidence="1">
    <location>
        <position position="340"/>
    </location>
    <ligand>
        <name>ATP</name>
        <dbReference type="ChEBI" id="CHEBI:30616"/>
    </ligand>
</feature>
<feature type="binding site" evidence="1">
    <location>
        <position position="412"/>
    </location>
    <ligand>
        <name>ATP</name>
        <dbReference type="ChEBI" id="CHEBI:30616"/>
    </ligand>
</feature>
<comment type="function">
    <text evidence="1">ATPase subunit of a proteasome-like degradation complex; this subunit has chaperone activity. The binding of ATP and its subsequent hydrolysis by HslU are essential for unfolding of protein substrates subsequently hydrolyzed by HslV. HslU recognizes the N-terminal part of its protein substrates and unfolds these before they are guided to HslV for hydrolysis.</text>
</comment>
<comment type="subunit">
    <text evidence="1">A double ring-shaped homohexamer of HslV is capped on each side by a ring-shaped HslU homohexamer. The assembly of the HslU/HslV complex is dependent on binding of ATP.</text>
</comment>
<comment type="subcellular location">
    <subcellularLocation>
        <location evidence="1">Cytoplasm</location>
    </subcellularLocation>
</comment>
<comment type="similarity">
    <text evidence="1">Belongs to the ClpX chaperone family. HslU subfamily.</text>
</comment>
<dbReference type="EMBL" id="CP000383">
    <property type="protein sequence ID" value="ABG60231.1"/>
    <property type="molecule type" value="Genomic_DNA"/>
</dbReference>
<dbReference type="RefSeq" id="WP_011586341.1">
    <property type="nucleotide sequence ID" value="NC_008255.1"/>
</dbReference>
<dbReference type="SMR" id="Q11QT3"/>
<dbReference type="STRING" id="269798.CHU_2990"/>
<dbReference type="KEGG" id="chu:CHU_2990"/>
<dbReference type="eggNOG" id="COG1220">
    <property type="taxonomic scope" value="Bacteria"/>
</dbReference>
<dbReference type="HOGENOM" id="CLU_033123_0_0_10"/>
<dbReference type="OrthoDB" id="9804062at2"/>
<dbReference type="Proteomes" id="UP000001822">
    <property type="component" value="Chromosome"/>
</dbReference>
<dbReference type="GO" id="GO:0009376">
    <property type="term" value="C:HslUV protease complex"/>
    <property type="evidence" value="ECO:0007669"/>
    <property type="project" value="UniProtKB-UniRule"/>
</dbReference>
<dbReference type="GO" id="GO:0005524">
    <property type="term" value="F:ATP binding"/>
    <property type="evidence" value="ECO:0007669"/>
    <property type="project" value="UniProtKB-UniRule"/>
</dbReference>
<dbReference type="GO" id="GO:0016887">
    <property type="term" value="F:ATP hydrolysis activity"/>
    <property type="evidence" value="ECO:0007669"/>
    <property type="project" value="InterPro"/>
</dbReference>
<dbReference type="GO" id="GO:0008233">
    <property type="term" value="F:peptidase activity"/>
    <property type="evidence" value="ECO:0007669"/>
    <property type="project" value="InterPro"/>
</dbReference>
<dbReference type="GO" id="GO:0036402">
    <property type="term" value="F:proteasome-activating activity"/>
    <property type="evidence" value="ECO:0007669"/>
    <property type="project" value="UniProtKB-UniRule"/>
</dbReference>
<dbReference type="GO" id="GO:0043335">
    <property type="term" value="P:protein unfolding"/>
    <property type="evidence" value="ECO:0007669"/>
    <property type="project" value="UniProtKB-UniRule"/>
</dbReference>
<dbReference type="GO" id="GO:0051603">
    <property type="term" value="P:proteolysis involved in protein catabolic process"/>
    <property type="evidence" value="ECO:0007669"/>
    <property type="project" value="TreeGrafter"/>
</dbReference>
<dbReference type="CDD" id="cd19498">
    <property type="entry name" value="RecA-like_HslU"/>
    <property type="match status" value="1"/>
</dbReference>
<dbReference type="FunFam" id="3.40.50.300:FF:000220">
    <property type="entry name" value="ATP-dependent protease ATPase subunit HslU"/>
    <property type="match status" value="1"/>
</dbReference>
<dbReference type="Gene3D" id="1.10.8.60">
    <property type="match status" value="1"/>
</dbReference>
<dbReference type="Gene3D" id="3.40.50.300">
    <property type="entry name" value="P-loop containing nucleotide triphosphate hydrolases"/>
    <property type="match status" value="2"/>
</dbReference>
<dbReference type="HAMAP" id="MF_00249">
    <property type="entry name" value="HslU"/>
    <property type="match status" value="1"/>
</dbReference>
<dbReference type="InterPro" id="IPR003593">
    <property type="entry name" value="AAA+_ATPase"/>
</dbReference>
<dbReference type="InterPro" id="IPR050052">
    <property type="entry name" value="ATP-dep_Clp_protease_ClpX"/>
</dbReference>
<dbReference type="InterPro" id="IPR003959">
    <property type="entry name" value="ATPase_AAA_core"/>
</dbReference>
<dbReference type="InterPro" id="IPR019489">
    <property type="entry name" value="Clp_ATPase_C"/>
</dbReference>
<dbReference type="InterPro" id="IPR004491">
    <property type="entry name" value="HslU"/>
</dbReference>
<dbReference type="InterPro" id="IPR027417">
    <property type="entry name" value="P-loop_NTPase"/>
</dbReference>
<dbReference type="NCBIfam" id="TIGR00390">
    <property type="entry name" value="hslU"/>
    <property type="match status" value="1"/>
</dbReference>
<dbReference type="NCBIfam" id="NF003544">
    <property type="entry name" value="PRK05201.1"/>
    <property type="match status" value="1"/>
</dbReference>
<dbReference type="PANTHER" id="PTHR48102">
    <property type="entry name" value="ATP-DEPENDENT CLP PROTEASE ATP-BINDING SUBUNIT CLPX-LIKE, MITOCHONDRIAL-RELATED"/>
    <property type="match status" value="1"/>
</dbReference>
<dbReference type="PANTHER" id="PTHR48102:SF3">
    <property type="entry name" value="ATP-DEPENDENT PROTEASE ATPASE SUBUNIT HSLU"/>
    <property type="match status" value="1"/>
</dbReference>
<dbReference type="Pfam" id="PF00004">
    <property type="entry name" value="AAA"/>
    <property type="match status" value="1"/>
</dbReference>
<dbReference type="Pfam" id="PF07724">
    <property type="entry name" value="AAA_2"/>
    <property type="match status" value="1"/>
</dbReference>
<dbReference type="SMART" id="SM00382">
    <property type="entry name" value="AAA"/>
    <property type="match status" value="1"/>
</dbReference>
<dbReference type="SMART" id="SM01086">
    <property type="entry name" value="ClpB_D2-small"/>
    <property type="match status" value="1"/>
</dbReference>
<dbReference type="SUPFAM" id="SSF52540">
    <property type="entry name" value="P-loop containing nucleoside triphosphate hydrolases"/>
    <property type="match status" value="1"/>
</dbReference>
<reference key="1">
    <citation type="journal article" date="2007" name="Appl. Environ. Microbiol.">
        <title>Genome sequence of the cellulolytic gliding bacterium Cytophaga hutchinsonii.</title>
        <authorList>
            <person name="Xie G."/>
            <person name="Bruce D.C."/>
            <person name="Challacombe J.F."/>
            <person name="Chertkov O."/>
            <person name="Detter J.C."/>
            <person name="Gilna P."/>
            <person name="Han C.S."/>
            <person name="Lucas S."/>
            <person name="Misra M."/>
            <person name="Myers G.L."/>
            <person name="Richardson P."/>
            <person name="Tapia R."/>
            <person name="Thayer N."/>
            <person name="Thompson L.S."/>
            <person name="Brettin T.S."/>
            <person name="Henrissat B."/>
            <person name="Wilson D.B."/>
            <person name="McBride M.J."/>
        </authorList>
    </citation>
    <scope>NUCLEOTIDE SEQUENCE [LARGE SCALE GENOMIC DNA]</scope>
    <source>
        <strain>ATCC 33406 / DSM 1761 / JCM 20678 / CIP 103989 / IAM 12607 / NBRC 15051 / NCIMB 9469 / D465</strain>
    </source>
</reference>
<accession>Q11QT3</accession>
<keyword id="KW-0067">ATP-binding</keyword>
<keyword id="KW-0143">Chaperone</keyword>
<keyword id="KW-0963">Cytoplasm</keyword>
<keyword id="KW-0547">Nucleotide-binding</keyword>
<keyword id="KW-1185">Reference proteome</keyword>
<keyword id="KW-0346">Stress response</keyword>
<gene>
    <name evidence="1" type="primary">hslU</name>
    <name type="ordered locus">CHU_2990</name>
</gene>